<gene>
    <name type="primary">ANGPTL1</name>
</gene>
<keyword id="KW-0175">Coiled coil</keyword>
<keyword id="KW-1015">Disulfide bond</keyword>
<keyword id="KW-0325">Glycoprotein</keyword>
<keyword id="KW-1185">Reference proteome</keyword>
<keyword id="KW-0964">Secreted</keyword>
<keyword id="KW-0732">Signal</keyword>
<sequence length="491" mass="56674">MKAFIWTLSVLFFLLMGIGHGRGRQFKIKKITQRRYPRATDGKEDAKKCSYTFLVPEQKITGPICVNTKGQDAGTIKDMITRMDLENLKDVLSKQKREIDVLQLVVDVDGNIVNEVKLLRKESRNMNSRVTQLYMQLLHEIIRKRDNSLELSQLENKILNVTTEMLKMATRYRELEVKYASLTDLVNNQSVMITLLEEQCLRIFSRQDPHVSPPLVQVVPQHIPNSHQYTPGLLGGNEIQRDPGYPRDLMPPPDLVTSPTKSPLKIPPVTFINEGPYKDCQHAKDAGHSVSGIYMIKPENSNGPMQLWCENSLDPGGWTVIQKRTDGSVNFFRNWENYKKGFGNIDGEYWLGLENIYLLSNQDNYKLLIELEDWSDKKVYAEYSSFRLEPESEFYRLRLGTYQGNAGDSMMWHNGKQFTTLDRDKDMYAGNCAHFHKGGWWYNACAHSNLNGVWYRGGHYRSKYQDGIFWAEYRGGSYSLRAVQMLIKPID</sequence>
<protein>
    <recommendedName>
        <fullName>Angiopoietin-related protein 1</fullName>
    </recommendedName>
    <alternativeName>
        <fullName>Angiopoietin-like protein 1</fullName>
    </alternativeName>
</protein>
<accession>Q1RMR1</accession>
<accession>B2Z4A9</accession>
<reference key="1">
    <citation type="submission" date="2008-03" db="EMBL/GenBank/DDBJ databases">
        <title>Genomic structure of Bos taurus angiopoietin-like proteins.</title>
        <authorList>
            <person name="Shui Y."/>
        </authorList>
    </citation>
    <scope>NUCLEOTIDE SEQUENCE [GENOMIC DNA / MRNA]</scope>
</reference>
<reference key="2">
    <citation type="submission" date="2006-04" db="EMBL/GenBank/DDBJ databases">
        <authorList>
            <consortium name="NIH - Mammalian Gene Collection (MGC) project"/>
        </authorList>
    </citation>
    <scope>NUCLEOTIDE SEQUENCE [LARGE SCALE MRNA]</scope>
    <source>
        <strain>Hereford</strain>
        <tissue>Uterus</tissue>
    </source>
</reference>
<evidence type="ECO:0000250" key="1"/>
<evidence type="ECO:0000255" key="2"/>
<evidence type="ECO:0000255" key="3">
    <source>
        <dbReference type="PROSITE-ProRule" id="PRU00739"/>
    </source>
</evidence>
<organism>
    <name type="scientific">Bos taurus</name>
    <name type="common">Bovine</name>
    <dbReference type="NCBI Taxonomy" id="9913"/>
    <lineage>
        <taxon>Eukaryota</taxon>
        <taxon>Metazoa</taxon>
        <taxon>Chordata</taxon>
        <taxon>Craniata</taxon>
        <taxon>Vertebrata</taxon>
        <taxon>Euteleostomi</taxon>
        <taxon>Mammalia</taxon>
        <taxon>Eutheria</taxon>
        <taxon>Laurasiatheria</taxon>
        <taxon>Artiodactyla</taxon>
        <taxon>Ruminantia</taxon>
        <taxon>Pecora</taxon>
        <taxon>Bovidae</taxon>
        <taxon>Bovinae</taxon>
        <taxon>Bos</taxon>
    </lineage>
</organism>
<dbReference type="EMBL" id="EU599224">
    <property type="protein sequence ID" value="ACD50900.1"/>
    <property type="molecule type" value="mRNA"/>
</dbReference>
<dbReference type="EMBL" id="EU599231">
    <property type="protein sequence ID" value="ACD50907.1"/>
    <property type="molecule type" value="Genomic_DNA"/>
</dbReference>
<dbReference type="EMBL" id="BC114763">
    <property type="protein sequence ID" value="AAI14764.1"/>
    <property type="molecule type" value="mRNA"/>
</dbReference>
<dbReference type="RefSeq" id="NP_001068894.1">
    <property type="nucleotide sequence ID" value="NM_001075426.2"/>
</dbReference>
<dbReference type="RefSeq" id="XP_015330623.1">
    <property type="nucleotide sequence ID" value="XM_015475137.3"/>
</dbReference>
<dbReference type="SMR" id="Q1RMR1"/>
<dbReference type="FunCoup" id="Q1RMR1">
    <property type="interactions" value="55"/>
</dbReference>
<dbReference type="STRING" id="9913.ENSBTAP00000014193"/>
<dbReference type="GlyCosmos" id="Q1RMR1">
    <property type="glycosylation" value="2 sites, No reported glycans"/>
</dbReference>
<dbReference type="GlyGen" id="Q1RMR1">
    <property type="glycosylation" value="2 sites"/>
</dbReference>
<dbReference type="PaxDb" id="9913-ENSBTAP00000014193"/>
<dbReference type="GeneID" id="509971"/>
<dbReference type="KEGG" id="bta:509971"/>
<dbReference type="CTD" id="9068"/>
<dbReference type="VEuPathDB" id="HostDB:ENSBTAG00000010719"/>
<dbReference type="eggNOG" id="KOG2579">
    <property type="taxonomic scope" value="Eukaryota"/>
</dbReference>
<dbReference type="HOGENOM" id="CLU_038628_0_0_1"/>
<dbReference type="InParanoid" id="Q1RMR1"/>
<dbReference type="OMA" id="CQHAKDA"/>
<dbReference type="OrthoDB" id="7871457at2759"/>
<dbReference type="TreeFam" id="TF336658"/>
<dbReference type="Proteomes" id="UP000009136">
    <property type="component" value="Chromosome 16"/>
</dbReference>
<dbReference type="Bgee" id="ENSBTAG00000010719">
    <property type="expression patterns" value="Expressed in intramuscular adipose tissue and 100 other cell types or tissues"/>
</dbReference>
<dbReference type="GO" id="GO:0062023">
    <property type="term" value="C:collagen-containing extracellular matrix"/>
    <property type="evidence" value="ECO:0000318"/>
    <property type="project" value="GO_Central"/>
</dbReference>
<dbReference type="GO" id="GO:0005615">
    <property type="term" value="C:extracellular space"/>
    <property type="evidence" value="ECO:0000318"/>
    <property type="project" value="GO_Central"/>
</dbReference>
<dbReference type="GO" id="GO:0005102">
    <property type="term" value="F:signaling receptor binding"/>
    <property type="evidence" value="ECO:0000318"/>
    <property type="project" value="GO_Central"/>
</dbReference>
<dbReference type="GO" id="GO:0007596">
    <property type="term" value="P:blood coagulation"/>
    <property type="evidence" value="ECO:0007669"/>
    <property type="project" value="InterPro"/>
</dbReference>
<dbReference type="GO" id="GO:0007169">
    <property type="term" value="P:cell surface receptor protein tyrosine kinase signaling pathway"/>
    <property type="evidence" value="ECO:0000318"/>
    <property type="project" value="GO_Central"/>
</dbReference>
<dbReference type="CDD" id="cd00087">
    <property type="entry name" value="FReD"/>
    <property type="match status" value="1"/>
</dbReference>
<dbReference type="FunFam" id="3.90.215.10:FF:000001">
    <property type="entry name" value="Tenascin isoform 1"/>
    <property type="match status" value="1"/>
</dbReference>
<dbReference type="Gene3D" id="3.90.215.10">
    <property type="entry name" value="Gamma Fibrinogen, chain A, domain 1"/>
    <property type="match status" value="1"/>
</dbReference>
<dbReference type="InterPro" id="IPR037579">
    <property type="entry name" value="FIB_ANG-like"/>
</dbReference>
<dbReference type="InterPro" id="IPR036056">
    <property type="entry name" value="Fibrinogen-like_C"/>
</dbReference>
<dbReference type="InterPro" id="IPR014716">
    <property type="entry name" value="Fibrinogen_a/b/g_C_1"/>
</dbReference>
<dbReference type="InterPro" id="IPR002181">
    <property type="entry name" value="Fibrinogen_a/b/g_C_dom"/>
</dbReference>
<dbReference type="InterPro" id="IPR020837">
    <property type="entry name" value="Fibrinogen_CS"/>
</dbReference>
<dbReference type="NCBIfam" id="NF040941">
    <property type="entry name" value="GGGWT_bact"/>
    <property type="match status" value="1"/>
</dbReference>
<dbReference type="PANTHER" id="PTHR47221">
    <property type="entry name" value="FIBRINOGEN ALPHA CHAIN"/>
    <property type="match status" value="1"/>
</dbReference>
<dbReference type="PANTHER" id="PTHR47221:SF5">
    <property type="entry name" value="FIBRINOGEN C-TERMINAL DOMAIN-CONTAINING PROTEIN"/>
    <property type="match status" value="1"/>
</dbReference>
<dbReference type="Pfam" id="PF00147">
    <property type="entry name" value="Fibrinogen_C"/>
    <property type="match status" value="1"/>
</dbReference>
<dbReference type="SMART" id="SM00186">
    <property type="entry name" value="FBG"/>
    <property type="match status" value="1"/>
</dbReference>
<dbReference type="SUPFAM" id="SSF56496">
    <property type="entry name" value="Fibrinogen C-terminal domain-like"/>
    <property type="match status" value="1"/>
</dbReference>
<dbReference type="PROSITE" id="PS00514">
    <property type="entry name" value="FIBRINOGEN_C_1"/>
    <property type="match status" value="1"/>
</dbReference>
<dbReference type="PROSITE" id="PS51406">
    <property type="entry name" value="FIBRINOGEN_C_2"/>
    <property type="match status" value="1"/>
</dbReference>
<proteinExistence type="evidence at transcript level"/>
<name>ANGL1_BOVIN</name>
<comment type="subcellular location">
    <subcellularLocation>
        <location evidence="1">Secreted</location>
    </subcellularLocation>
</comment>
<feature type="signal peptide" evidence="2">
    <location>
        <begin position="1"/>
        <end position="23"/>
    </location>
</feature>
<feature type="chain" id="PRO_0000278837" description="Angiopoietin-related protein 1">
    <location>
        <begin position="24"/>
        <end position="491"/>
    </location>
</feature>
<feature type="domain" description="Fibrinogen C-terminal" evidence="3">
    <location>
        <begin position="271"/>
        <end position="491"/>
    </location>
</feature>
<feature type="coiled-coil region" evidence="2">
    <location>
        <begin position="80"/>
        <end position="168"/>
    </location>
</feature>
<feature type="glycosylation site" description="N-linked (GlcNAc...) asparagine" evidence="2">
    <location>
        <position position="160"/>
    </location>
</feature>
<feature type="glycosylation site" description="N-linked (GlcNAc...) asparagine" evidence="2">
    <location>
        <position position="188"/>
    </location>
</feature>
<feature type="disulfide bond" evidence="3">
    <location>
        <begin position="280"/>
        <end position="309"/>
    </location>
</feature>
<feature type="disulfide bond" evidence="3">
    <location>
        <begin position="432"/>
        <end position="445"/>
    </location>
</feature>